<protein>
    <recommendedName>
        <fullName>MYND-type zinc finger protein MUB1</fullName>
    </recommendedName>
    <alternativeName>
        <fullName>Multi-budding protein</fullName>
    </alternativeName>
</protein>
<keyword id="KW-0963">Cytoplasm</keyword>
<keyword id="KW-0479">Metal-binding</keyword>
<keyword id="KW-1185">Reference proteome</keyword>
<keyword id="KW-0833">Ubl conjugation pathway</keyword>
<keyword id="KW-0862">Zinc</keyword>
<keyword id="KW-0863">Zinc-finger</keyword>
<proteinExistence type="evidence at protein level"/>
<reference key="1">
    <citation type="journal article" date="1997" name="Nature">
        <title>The nucleotide sequence of Saccharomyces cerevisiae chromosome XIII.</title>
        <authorList>
            <person name="Bowman S."/>
            <person name="Churcher C.M."/>
            <person name="Badcock K."/>
            <person name="Brown D."/>
            <person name="Chillingworth T."/>
            <person name="Connor R."/>
            <person name="Dedman K."/>
            <person name="Devlin K."/>
            <person name="Gentles S."/>
            <person name="Hamlin N."/>
            <person name="Hunt S."/>
            <person name="Jagels K."/>
            <person name="Lye G."/>
            <person name="Moule S."/>
            <person name="Odell C."/>
            <person name="Pearson D."/>
            <person name="Rajandream M.A."/>
            <person name="Rice P."/>
            <person name="Skelton J."/>
            <person name="Walsh S.V."/>
            <person name="Whitehead S."/>
            <person name="Barrell B.G."/>
        </authorList>
    </citation>
    <scope>NUCLEOTIDE SEQUENCE [LARGE SCALE GENOMIC DNA]</scope>
    <source>
        <strain>ATCC 204508 / S288c</strain>
    </source>
</reference>
<reference key="2">
    <citation type="journal article" date="2014" name="G3 (Bethesda)">
        <title>The reference genome sequence of Saccharomyces cerevisiae: Then and now.</title>
        <authorList>
            <person name="Engel S.R."/>
            <person name="Dietrich F.S."/>
            <person name="Fisk D.G."/>
            <person name="Binkley G."/>
            <person name="Balakrishnan R."/>
            <person name="Costanzo M.C."/>
            <person name="Dwight S.S."/>
            <person name="Hitz B.C."/>
            <person name="Karra K."/>
            <person name="Nash R.S."/>
            <person name="Weng S."/>
            <person name="Wong E.D."/>
            <person name="Lloyd P."/>
            <person name="Skrzypek M.S."/>
            <person name="Miyasato S.R."/>
            <person name="Simison M."/>
            <person name="Cherry J.M."/>
        </authorList>
    </citation>
    <scope>GENOME REANNOTATION</scope>
    <source>
        <strain>ATCC 204508 / S288c</strain>
    </source>
</reference>
<reference key="3">
    <citation type="journal article" date="1998" name="EMBO J.">
        <title>Integrity of a Zn finger-like domain in SamB is crucial for morphogenesis in ascomycetous fungi.</title>
        <authorList>
            <person name="Kruger M."/>
            <person name="Fischer R."/>
        </authorList>
    </citation>
    <scope>POSSIBLE FUNCTION</scope>
</reference>
<reference key="4">
    <citation type="journal article" date="2003" name="Nature">
        <title>Global analysis of protein expression in yeast.</title>
        <authorList>
            <person name="Ghaemmaghami S."/>
            <person name="Huh W.-K."/>
            <person name="Bower K."/>
            <person name="Howson R.W."/>
            <person name="Belle A."/>
            <person name="Dephoure N."/>
            <person name="O'Shea E.K."/>
            <person name="Weissman J.S."/>
        </authorList>
    </citation>
    <scope>LEVEL OF PROTEIN EXPRESSION [LARGE SCALE ANALYSIS]</scope>
</reference>
<reference key="5">
    <citation type="journal article" date="2008" name="Mol. Cell. Biol.">
        <title>Genome-wide analysis identifies MYND-domain protein Mub1 as an essential factor for Rpn4 ubiquitylation.</title>
        <authorList>
            <person name="Ju D."/>
            <person name="Wang X."/>
            <person name="Xu H."/>
            <person name="Xie Y."/>
        </authorList>
    </citation>
    <scope>FUNCTION</scope>
    <scope>INTERACTION WITH UBR2 AND RPN4</scope>
    <scope>DOMAIN</scope>
</reference>
<gene>
    <name type="primary">MUB1</name>
    <name type="ordered locus">YMR100W</name>
    <name type="ORF">YM6543.07</name>
</gene>
<sequence length="620" mass="72251">MRDSNHRSLTSNKPIVTITSTVYDRRALDINSSIPLINSLNYLTYLTSNSSKVRETVANDGALERLVSILRSCHLSLFELLDLDLENFNEHENIKDLWKEKRLALCAWKWTLTFQCLVLTGTRGTEQIRKKVVMSGVLSVLVTVLDNYLLYHKNYDFIKDQTMTFDFKGITTETMYKFMRKDENETYQQYIEFITGQDKLKLSTDKNFLNERLVAPSMTIPTDFSDIWGRFADLASNFEPDQERHDDDIDIDSEVESENFDAHKNFFSQPDINRPTISTPREFFLGRIVPKQDDVIWSLQLLAFVSKYTYMKSTLQNVELVESLSFRSMAYKIKQRISEENDLEEQERDVTVKLSSLYPYLSKNPENNSKVKALDTSKMDPFFKELEELSNRCQQEEQNEICNNHCPVLNLFERYRVPKPSDDNAYGKDKERINLRKKISDNFERRWSYDKMKKELTNIVYKNKVLTNVVNIFPLVEKYTVSAENTHDVIYWSSVIMRNSCRKNEILGVRQCANFSCGKWEDFPRQFAKCRRCKRTKYCSRKCQLKAWGYHRYWCHEVGSSHMRSTNTTTGVNTPNEPSSLNATATTAADVSNSTSTFTPNISTTVPDEISNRDENSIPE</sequence>
<evidence type="ECO:0000250" key="1"/>
<evidence type="ECO:0000255" key="2">
    <source>
        <dbReference type="PROSITE-ProRule" id="PRU00134"/>
    </source>
</evidence>
<evidence type="ECO:0000256" key="3">
    <source>
        <dbReference type="SAM" id="MobiDB-lite"/>
    </source>
</evidence>
<evidence type="ECO:0000269" key="4">
    <source>
    </source>
</evidence>
<evidence type="ECO:0000269" key="5">
    <source>
    </source>
</evidence>
<evidence type="ECO:0000305" key="6"/>
<name>MUB1_YEAST</name>
<dbReference type="EMBL" id="Z49807">
    <property type="protein sequence ID" value="CAA89901.1"/>
    <property type="molecule type" value="Genomic_DNA"/>
</dbReference>
<dbReference type="EMBL" id="BK006946">
    <property type="protein sequence ID" value="DAA09997.1"/>
    <property type="molecule type" value="Genomic_DNA"/>
</dbReference>
<dbReference type="PIR" id="S55086">
    <property type="entry name" value="S55086"/>
</dbReference>
<dbReference type="RefSeq" id="NP_013818.1">
    <property type="nucleotide sequence ID" value="NM_001182600.1"/>
</dbReference>
<dbReference type="BioGRID" id="35276">
    <property type="interactions" value="333"/>
</dbReference>
<dbReference type="ComplexPortal" id="CPX-2937">
    <property type="entry name" value="MUB1-RAD6-UBR2 ubiquitin ligase complex"/>
</dbReference>
<dbReference type="DIP" id="DIP-6429N"/>
<dbReference type="FunCoup" id="Q03162">
    <property type="interactions" value="112"/>
</dbReference>
<dbReference type="IntAct" id="Q03162">
    <property type="interactions" value="9"/>
</dbReference>
<dbReference type="MINT" id="Q03162"/>
<dbReference type="STRING" id="4932.YMR100W"/>
<dbReference type="iPTMnet" id="Q03162"/>
<dbReference type="PaxDb" id="4932-YMR100W"/>
<dbReference type="PeptideAtlas" id="Q03162"/>
<dbReference type="EnsemblFungi" id="YMR100W_mRNA">
    <property type="protein sequence ID" value="YMR100W"/>
    <property type="gene ID" value="YMR100W"/>
</dbReference>
<dbReference type="GeneID" id="855126"/>
<dbReference type="KEGG" id="sce:YMR100W"/>
<dbReference type="AGR" id="SGD:S000004706"/>
<dbReference type="SGD" id="S000004706">
    <property type="gene designation" value="MUB1"/>
</dbReference>
<dbReference type="VEuPathDB" id="FungiDB:YMR100W"/>
<dbReference type="eggNOG" id="ENOG502QTM3">
    <property type="taxonomic scope" value="Eukaryota"/>
</dbReference>
<dbReference type="HOGENOM" id="CLU_014851_1_0_1"/>
<dbReference type="InParanoid" id="Q03162"/>
<dbReference type="OMA" id="QDMQYWA"/>
<dbReference type="OrthoDB" id="5594178at2759"/>
<dbReference type="BioCyc" id="YEAST:G3O-32800-MONOMER"/>
<dbReference type="BioGRID-ORCS" id="855126">
    <property type="hits" value="0 hits in 10 CRISPR screens"/>
</dbReference>
<dbReference type="PRO" id="PR:Q03162"/>
<dbReference type="Proteomes" id="UP000002311">
    <property type="component" value="Chromosome XIII"/>
</dbReference>
<dbReference type="RNAct" id="Q03162">
    <property type="molecule type" value="protein"/>
</dbReference>
<dbReference type="GO" id="GO:0005737">
    <property type="term" value="C:cytoplasm"/>
    <property type="evidence" value="ECO:0007669"/>
    <property type="project" value="UniProtKB-SubCell"/>
</dbReference>
<dbReference type="GO" id="GO:1990304">
    <property type="term" value="C:MUB1-RAD6-UBR2 ubiquitin ligase complex"/>
    <property type="evidence" value="ECO:0000353"/>
    <property type="project" value="ComplexPortal"/>
</dbReference>
<dbReference type="GO" id="GO:0008270">
    <property type="term" value="F:zinc ion binding"/>
    <property type="evidence" value="ECO:0007669"/>
    <property type="project" value="UniProtKB-KW"/>
</dbReference>
<dbReference type="GO" id="GO:0007163">
    <property type="term" value="P:establishment or maintenance of cell polarity"/>
    <property type="evidence" value="ECO:0000318"/>
    <property type="project" value="GO_Central"/>
</dbReference>
<dbReference type="GO" id="GO:0016567">
    <property type="term" value="P:protein ubiquitination"/>
    <property type="evidence" value="ECO:0000314"/>
    <property type="project" value="ComplexPortal"/>
</dbReference>
<dbReference type="GO" id="GO:0006511">
    <property type="term" value="P:ubiquitin-dependent protein catabolic process"/>
    <property type="evidence" value="ECO:0000314"/>
    <property type="project" value="SGD"/>
</dbReference>
<dbReference type="GO" id="GO:0071596">
    <property type="term" value="P:ubiquitin-dependent protein catabolic process via the N-end rule pathway"/>
    <property type="evidence" value="ECO:0000303"/>
    <property type="project" value="ComplexPortal"/>
</dbReference>
<dbReference type="FunFam" id="6.10.140.2220:FF:000003">
    <property type="entry name" value="MYND-type zinc finger protein"/>
    <property type="match status" value="1"/>
</dbReference>
<dbReference type="Gene3D" id="6.10.140.2220">
    <property type="match status" value="1"/>
</dbReference>
<dbReference type="InterPro" id="IPR051664">
    <property type="entry name" value="MYND-type_zinc_finger"/>
</dbReference>
<dbReference type="InterPro" id="IPR002893">
    <property type="entry name" value="Znf_MYND"/>
</dbReference>
<dbReference type="PANTHER" id="PTHR47442">
    <property type="entry name" value="MYND-TYPE ZINC FINGER PROTEIN MUB1"/>
    <property type="match status" value="1"/>
</dbReference>
<dbReference type="PANTHER" id="PTHR47442:SF1">
    <property type="entry name" value="MYND-TYPE ZINC FINGER PROTEIN MUB1"/>
    <property type="match status" value="1"/>
</dbReference>
<dbReference type="Pfam" id="PF01753">
    <property type="entry name" value="zf-MYND"/>
    <property type="match status" value="1"/>
</dbReference>
<dbReference type="SUPFAM" id="SSF144232">
    <property type="entry name" value="HIT/MYND zinc finger-like"/>
    <property type="match status" value="1"/>
</dbReference>
<dbReference type="PROSITE" id="PS01360">
    <property type="entry name" value="ZF_MYND_1"/>
    <property type="match status" value="1"/>
</dbReference>
<dbReference type="PROSITE" id="PS50865">
    <property type="entry name" value="ZF_MYND_2"/>
    <property type="match status" value="1"/>
</dbReference>
<feature type="chain" id="PRO_0000218323" description="MYND-type zinc finger protein MUB1">
    <location>
        <begin position="1"/>
        <end position="620"/>
    </location>
</feature>
<feature type="zinc finger region" description="MYND-type; degenerate" evidence="2">
    <location>
        <begin position="514"/>
        <end position="555"/>
    </location>
</feature>
<feature type="region of interest" description="Disordered" evidence="3">
    <location>
        <begin position="563"/>
        <end position="620"/>
    </location>
</feature>
<feature type="compositionally biased region" description="Polar residues" evidence="3">
    <location>
        <begin position="563"/>
        <end position="606"/>
    </location>
</feature>
<feature type="compositionally biased region" description="Basic and acidic residues" evidence="3">
    <location>
        <begin position="610"/>
        <end position="620"/>
    </location>
</feature>
<feature type="binding site" evidence="2">
    <location>
        <position position="530"/>
    </location>
    <ligand>
        <name>Zn(2+)</name>
        <dbReference type="ChEBI" id="CHEBI:29105"/>
    </ligand>
</feature>
<feature type="binding site" evidence="2">
    <location>
        <position position="533"/>
    </location>
    <ligand>
        <name>Zn(2+)</name>
        <dbReference type="ChEBI" id="CHEBI:29105"/>
    </ligand>
</feature>
<feature type="binding site" evidence="2">
    <location>
        <position position="551"/>
    </location>
    <ligand>
        <name>Zn(2+)</name>
        <dbReference type="ChEBI" id="CHEBI:29105"/>
    </ligand>
</feature>
<feature type="binding site" evidence="2">
    <location>
        <position position="555"/>
    </location>
    <ligand>
        <name>Zn(2+)</name>
        <dbReference type="ChEBI" id="CHEBI:29105"/>
    </ligand>
</feature>
<comment type="function">
    <text evidence="5">Involved in the determination of the onset of polarized growth. Required for the ubiquitin-dependent degradation of RPN4. Cooperates with UBR2 to transfer ubiquitin from RAD6 to RPN4.</text>
</comment>
<comment type="subunit">
    <text evidence="5">Interacts with UBR2 and RPN4.</text>
</comment>
<comment type="interaction">
    <interactant intactId="EBI-28207">
        <id>Q03162</id>
    </interactant>
    <interactant intactId="EBI-15931">
        <id>Q03465</id>
        <label>RPN4</label>
    </interactant>
    <organismsDiffer>false</organismsDiffer>
    <experiments>3</experiments>
</comment>
<comment type="interaction">
    <interactant intactId="EBI-28207">
        <id>Q03162</id>
    </interactant>
    <interactant intactId="EBI-34338">
        <id>Q07963</id>
        <label>UBR2</label>
    </interactant>
    <organismsDiffer>false</organismsDiffer>
    <experiments>2</experiments>
</comment>
<comment type="subcellular location">
    <subcellularLocation>
        <location evidence="1">Cytoplasm</location>
    </subcellularLocation>
</comment>
<comment type="domain">
    <text evidence="5">The MYND-type zinc finger is essential for the ubiquitin-dependent degradation of RPN4.</text>
</comment>
<comment type="miscellaneous">
    <text evidence="4">Present with 125 molecules/cell in log phase SD medium.</text>
</comment>
<comment type="miscellaneous">
    <text>Is a short-lived protein whose degradation is dependent on the UBR2/RAD6 ubiquitin-protein ligase.</text>
</comment>
<comment type="similarity">
    <text evidence="6">Belongs to the MUB1/samB family.</text>
</comment>
<organism>
    <name type="scientific">Saccharomyces cerevisiae (strain ATCC 204508 / S288c)</name>
    <name type="common">Baker's yeast</name>
    <dbReference type="NCBI Taxonomy" id="559292"/>
    <lineage>
        <taxon>Eukaryota</taxon>
        <taxon>Fungi</taxon>
        <taxon>Dikarya</taxon>
        <taxon>Ascomycota</taxon>
        <taxon>Saccharomycotina</taxon>
        <taxon>Saccharomycetes</taxon>
        <taxon>Saccharomycetales</taxon>
        <taxon>Saccharomycetaceae</taxon>
        <taxon>Saccharomyces</taxon>
    </lineage>
</organism>
<accession>Q03162</accession>
<accession>D6VZS3</accession>